<evidence type="ECO:0000255" key="1">
    <source>
        <dbReference type="HAMAP-Rule" id="MF_00142"/>
    </source>
</evidence>
<feature type="chain" id="PRO_1000010960" description="Iron-sulfur cluster assembly protein CyaY">
    <location>
        <begin position="1"/>
        <end position="106"/>
    </location>
</feature>
<proteinExistence type="inferred from homology"/>
<protein>
    <recommendedName>
        <fullName evidence="1">Iron-sulfur cluster assembly protein CyaY</fullName>
    </recommendedName>
</protein>
<name>CYAY_SHIBS</name>
<dbReference type="EMBL" id="CP000036">
    <property type="protein sequence ID" value="ABB68278.1"/>
    <property type="molecule type" value="Genomic_DNA"/>
</dbReference>
<dbReference type="RefSeq" id="WP_000999936.1">
    <property type="nucleotide sequence ID" value="NC_007613.1"/>
</dbReference>
<dbReference type="SMR" id="Q31UI1"/>
<dbReference type="KEGG" id="sbo:SBO_3819"/>
<dbReference type="HOGENOM" id="CLU_080880_3_0_6"/>
<dbReference type="Proteomes" id="UP000007067">
    <property type="component" value="Chromosome"/>
</dbReference>
<dbReference type="GO" id="GO:0005829">
    <property type="term" value="C:cytosol"/>
    <property type="evidence" value="ECO:0007669"/>
    <property type="project" value="TreeGrafter"/>
</dbReference>
<dbReference type="GO" id="GO:0008199">
    <property type="term" value="F:ferric iron binding"/>
    <property type="evidence" value="ECO:0007669"/>
    <property type="project" value="InterPro"/>
</dbReference>
<dbReference type="GO" id="GO:0008198">
    <property type="term" value="F:ferrous iron binding"/>
    <property type="evidence" value="ECO:0007669"/>
    <property type="project" value="TreeGrafter"/>
</dbReference>
<dbReference type="GO" id="GO:0016226">
    <property type="term" value="P:iron-sulfur cluster assembly"/>
    <property type="evidence" value="ECO:0007669"/>
    <property type="project" value="UniProtKB-UniRule"/>
</dbReference>
<dbReference type="CDD" id="cd00503">
    <property type="entry name" value="Frataxin"/>
    <property type="match status" value="1"/>
</dbReference>
<dbReference type="FunFam" id="3.30.920.10:FF:000001">
    <property type="entry name" value="Iron-sulfur cluster assembly protein CyaY"/>
    <property type="match status" value="1"/>
</dbReference>
<dbReference type="Gene3D" id="3.30.920.10">
    <property type="entry name" value="Frataxin/CyaY"/>
    <property type="match status" value="1"/>
</dbReference>
<dbReference type="HAMAP" id="MF_00142">
    <property type="entry name" value="CyaY"/>
    <property type="match status" value="1"/>
</dbReference>
<dbReference type="InterPro" id="IPR047584">
    <property type="entry name" value="CyaY"/>
</dbReference>
<dbReference type="InterPro" id="IPR002908">
    <property type="entry name" value="Frataxin/CyaY"/>
</dbReference>
<dbReference type="InterPro" id="IPR036524">
    <property type="entry name" value="Frataxin/CyaY_sf"/>
</dbReference>
<dbReference type="InterPro" id="IPR020895">
    <property type="entry name" value="Frataxin_CS"/>
</dbReference>
<dbReference type="NCBIfam" id="TIGR03421">
    <property type="entry name" value="FeS_CyaY"/>
    <property type="match status" value="1"/>
</dbReference>
<dbReference type="PANTHER" id="PTHR16821">
    <property type="entry name" value="FRATAXIN"/>
    <property type="match status" value="1"/>
</dbReference>
<dbReference type="PANTHER" id="PTHR16821:SF2">
    <property type="entry name" value="FRATAXIN, MITOCHONDRIAL"/>
    <property type="match status" value="1"/>
</dbReference>
<dbReference type="Pfam" id="PF01491">
    <property type="entry name" value="Frataxin_Cyay"/>
    <property type="match status" value="1"/>
</dbReference>
<dbReference type="SMART" id="SM01219">
    <property type="entry name" value="Frataxin_Cyay"/>
    <property type="match status" value="1"/>
</dbReference>
<dbReference type="SUPFAM" id="SSF55387">
    <property type="entry name" value="Frataxin/Nqo15-like"/>
    <property type="match status" value="1"/>
</dbReference>
<dbReference type="PROSITE" id="PS01344">
    <property type="entry name" value="FRATAXIN_1"/>
    <property type="match status" value="1"/>
</dbReference>
<dbReference type="PROSITE" id="PS50810">
    <property type="entry name" value="FRATAXIN_2"/>
    <property type="match status" value="1"/>
</dbReference>
<comment type="function">
    <text evidence="1">Involved in iron-sulfur (Fe-S) cluster assembly. May act as a regulator of Fe-S biogenesis.</text>
</comment>
<comment type="similarity">
    <text evidence="1">Belongs to the frataxin family.</text>
</comment>
<organism>
    <name type="scientific">Shigella boydii serotype 4 (strain Sb227)</name>
    <dbReference type="NCBI Taxonomy" id="300268"/>
    <lineage>
        <taxon>Bacteria</taxon>
        <taxon>Pseudomonadati</taxon>
        <taxon>Pseudomonadota</taxon>
        <taxon>Gammaproteobacteria</taxon>
        <taxon>Enterobacterales</taxon>
        <taxon>Enterobacteriaceae</taxon>
        <taxon>Shigella</taxon>
    </lineage>
</organism>
<gene>
    <name evidence="1" type="primary">cyaY</name>
    <name type="ordered locus">SBO_3819</name>
</gene>
<accession>Q31UI1</accession>
<keyword id="KW-0408">Iron</keyword>
<keyword id="KW-0479">Metal-binding</keyword>
<reference key="1">
    <citation type="journal article" date="2005" name="Nucleic Acids Res.">
        <title>Genome dynamics and diversity of Shigella species, the etiologic agents of bacillary dysentery.</title>
        <authorList>
            <person name="Yang F."/>
            <person name="Yang J."/>
            <person name="Zhang X."/>
            <person name="Chen L."/>
            <person name="Jiang Y."/>
            <person name="Yan Y."/>
            <person name="Tang X."/>
            <person name="Wang J."/>
            <person name="Xiong Z."/>
            <person name="Dong J."/>
            <person name="Xue Y."/>
            <person name="Zhu Y."/>
            <person name="Xu X."/>
            <person name="Sun L."/>
            <person name="Chen S."/>
            <person name="Nie H."/>
            <person name="Peng J."/>
            <person name="Xu J."/>
            <person name="Wang Y."/>
            <person name="Yuan Z."/>
            <person name="Wen Y."/>
            <person name="Yao Z."/>
            <person name="Shen Y."/>
            <person name="Qiang B."/>
            <person name="Hou Y."/>
            <person name="Yu J."/>
            <person name="Jin Q."/>
        </authorList>
    </citation>
    <scope>NUCLEOTIDE SEQUENCE [LARGE SCALE GENOMIC DNA]</scope>
    <source>
        <strain>Sb227</strain>
    </source>
</reference>
<sequence length="106" mass="12212">MNDSEFHRLADQLWLTIEEHLDDWDGDSDIDCEINGGVLTITFENGSKIIINRQEPLHQVWLATKQGGYHFDLKGDEWICDRSGETFWDLLEQAATQQAGETVSFR</sequence>